<sequence length="158" mass="17943">MSASNLNEISKQILKEEETLQFSSFTNEDALQLGLFIVETAKREGKLIAVDITKNGVQLFHFKMTGTNEENTKWIERKKRVVSLHDRSSYYMQIQSEITGISYNEKYLLNTSEYAAFGGCFPIRIKDVGVIGMITVSGLPPEEDHELVIRAVKNHLTQ</sequence>
<feature type="chain" id="PRO_1000148414" description="UPF0303 protein BCA_3474">
    <location>
        <begin position="1"/>
        <end position="158"/>
    </location>
</feature>
<protein>
    <recommendedName>
        <fullName evidence="1">UPF0303 protein BCA_3474</fullName>
    </recommendedName>
</protein>
<accession>C1ELP8</accession>
<evidence type="ECO:0000255" key="1">
    <source>
        <dbReference type="HAMAP-Rule" id="MF_00761"/>
    </source>
</evidence>
<proteinExistence type="inferred from homology"/>
<comment type="similarity">
    <text evidence="1">Belongs to the UPF0303 family.</text>
</comment>
<gene>
    <name type="ordered locus">BCA_3474</name>
</gene>
<dbReference type="EMBL" id="CP001407">
    <property type="protein sequence ID" value="ACO30023.1"/>
    <property type="molecule type" value="Genomic_DNA"/>
</dbReference>
<dbReference type="SMR" id="C1ELP8"/>
<dbReference type="KEGG" id="bcx:BCA_3474"/>
<dbReference type="PATRIC" id="fig|572264.18.peg.3434"/>
<dbReference type="Proteomes" id="UP000002210">
    <property type="component" value="Chromosome"/>
</dbReference>
<dbReference type="FunFam" id="3.30.450.150:FF:000002">
    <property type="entry name" value="UPF0303 protein BCAH820_3413"/>
    <property type="match status" value="1"/>
</dbReference>
<dbReference type="Gene3D" id="3.30.450.150">
    <property type="entry name" value="Haem-degrading domain"/>
    <property type="match status" value="1"/>
</dbReference>
<dbReference type="HAMAP" id="MF_00761">
    <property type="entry name" value="UPF0303"/>
    <property type="match status" value="1"/>
</dbReference>
<dbReference type="InterPro" id="IPR005624">
    <property type="entry name" value="PduO/GlcC-like"/>
</dbReference>
<dbReference type="InterPro" id="IPR038084">
    <property type="entry name" value="PduO/GlcC-like_sf"/>
</dbReference>
<dbReference type="InterPro" id="IPR010371">
    <property type="entry name" value="YBR137W-like"/>
</dbReference>
<dbReference type="NCBIfam" id="NF002692">
    <property type="entry name" value="PRK02487.1-1"/>
    <property type="match status" value="1"/>
</dbReference>
<dbReference type="NCBIfam" id="NF002696">
    <property type="entry name" value="PRK02487.1-5"/>
    <property type="match status" value="1"/>
</dbReference>
<dbReference type="PANTHER" id="PTHR28255">
    <property type="match status" value="1"/>
</dbReference>
<dbReference type="PANTHER" id="PTHR28255:SF1">
    <property type="entry name" value="UPF0303 PROTEIN YBR137W"/>
    <property type="match status" value="1"/>
</dbReference>
<dbReference type="Pfam" id="PF03928">
    <property type="entry name" value="HbpS-like"/>
    <property type="match status" value="1"/>
</dbReference>
<dbReference type="PIRSF" id="PIRSF008757">
    <property type="entry name" value="UCP008757"/>
    <property type="match status" value="1"/>
</dbReference>
<dbReference type="SUPFAM" id="SSF143744">
    <property type="entry name" value="GlcG-like"/>
    <property type="match status" value="1"/>
</dbReference>
<reference key="1">
    <citation type="submission" date="2009-02" db="EMBL/GenBank/DDBJ databases">
        <title>Genome sequence of Bacillus cereus 03BB102.</title>
        <authorList>
            <person name="Dodson R.J."/>
            <person name="Jackson P."/>
            <person name="Munk A.C."/>
            <person name="Brettin T."/>
            <person name="Bruce D."/>
            <person name="Detter C."/>
            <person name="Tapia R."/>
            <person name="Han C."/>
            <person name="Sutton G."/>
            <person name="Sims D."/>
        </authorList>
    </citation>
    <scope>NUCLEOTIDE SEQUENCE [LARGE SCALE GENOMIC DNA]</scope>
    <source>
        <strain>03BB102</strain>
    </source>
</reference>
<organism>
    <name type="scientific">Bacillus cereus (strain 03BB102)</name>
    <dbReference type="NCBI Taxonomy" id="572264"/>
    <lineage>
        <taxon>Bacteria</taxon>
        <taxon>Bacillati</taxon>
        <taxon>Bacillota</taxon>
        <taxon>Bacilli</taxon>
        <taxon>Bacillales</taxon>
        <taxon>Bacillaceae</taxon>
        <taxon>Bacillus</taxon>
        <taxon>Bacillus cereus group</taxon>
    </lineage>
</organism>
<name>Y3474_BACC3</name>